<comment type="function">
    <text evidence="3 6">Recruits the capping protein complex to actin patches and the actomyosin contractile ring, and/or stabilizes their interaction (PubMed:12606027, PubMed:38088874). May serve as an adapter to link INP52 and INP53 to the cortical actin cytoskeleton (PubMed:12606027). Binds F-actin (PubMed:38088874).</text>
</comment>
<comment type="subunit">
    <text evidence="2 3">Interacts (via C-terminus) with the CAP1-CAP2 F-actin capping protein complex (PubMed:11489916). Interacts with INP52 (via SAC domain); the interaction is direct (PubMed:12606027). Interacts with INP53 (via SAC domain); the interaction is direct (PubMed:12606027). Interacts with RVS167 (PubMed:11489916). Interacts with SLA1 (PubMed:11489916).</text>
</comment>
<comment type="interaction">
    <interactant intactId="EBI-37047">
        <id>Q06604</id>
    </interactant>
    <interactant intactId="EBI-2036">
        <id>P15891</id>
        <label>ABP1</label>
    </interactant>
    <organismsDiffer>false</organismsDiffer>
    <experiments>2</experiments>
</comment>
<comment type="interaction">
    <interactant intactId="EBI-37047">
        <id>Q06604</id>
    </interactant>
    <interactant intactId="EBI-28834">
        <id>P50942</id>
        <label>INP52</label>
    </interactant>
    <organismsDiffer>false</organismsDiffer>
    <experiments>4</experiments>
</comment>
<comment type="interaction">
    <interactant intactId="EBI-37047">
        <id>Q06604</id>
    </interactant>
    <interactant intactId="EBI-22980">
        <id>P43603</id>
        <label>LSB3</label>
    </interactant>
    <organismsDiffer>false</organismsDiffer>
    <experiments>7</experiments>
</comment>
<comment type="interaction">
    <interactant intactId="EBI-37047">
        <id>Q06604</id>
    </interactant>
    <interactant intactId="EBI-14500">
        <id>P39743</id>
        <label>RVS167</label>
    </interactant>
    <organismsDiffer>false</organismsDiffer>
    <experiments>5</experiments>
</comment>
<comment type="interaction">
    <interactant intactId="EBI-37047">
        <id>Q06604</id>
    </interactant>
    <interactant intactId="EBI-6315249">
        <id>P0CF34</id>
        <label>SDC25</label>
    </interactant>
    <organismsDiffer>false</organismsDiffer>
    <experiments>2</experiments>
</comment>
<comment type="interaction">
    <interactant intactId="EBI-37047">
        <id>Q06604</id>
    </interactant>
    <interactant intactId="EBI-17313">
        <id>P32790</id>
        <label>SLA1</label>
    </interactant>
    <organismsDiffer>false</organismsDiffer>
    <experiments>5</experiments>
</comment>
<comment type="interaction">
    <interactant intactId="EBI-37047">
        <id>Q06604</id>
    </interactant>
    <interactant intactId="EBI-24460">
        <id>P32793</id>
        <label>YSC84</label>
    </interactant>
    <organismsDiffer>false</organismsDiffer>
    <experiments>6</experiments>
</comment>
<comment type="subcellular location">
    <subcellularLocation>
        <location evidence="3 6">Cytoplasm</location>
        <location evidence="3 6">Cytoskeleton</location>
        <location evidence="3 6">Actin patch</location>
    </subcellularLocation>
    <subcellularLocation>
        <location evidence="6">Cytoplasm</location>
        <location evidence="6">Cytoskeleton</location>
    </subcellularLocation>
    <subcellularLocation>
        <location evidence="3">Cell membrane</location>
        <topology evidence="3">Peripheral membrane protein</topology>
    </subcellularLocation>
    <text evidence="3 6">Localizes to the actomyosin contractile ring (PubMed:38088874). Peripheral membrane protein in a PtdIns(4)P and PtdIns(4,5)P2 manner (PubMed:12606027).</text>
</comment>
<comment type="PTM">
    <text evidence="5">Phosphorylated by CDC28.</text>
</comment>
<comment type="miscellaneous">
    <text evidence="4">Present with 704 molecules/cell in log phase SD medium.</text>
</comment>
<keyword id="KW-0009">Actin-binding</keyword>
<keyword id="KW-1003">Cell membrane</keyword>
<keyword id="KW-0963">Cytoplasm</keyword>
<keyword id="KW-0206">Cytoskeleton</keyword>
<keyword id="KW-0472">Membrane</keyword>
<keyword id="KW-0597">Phosphoprotein</keyword>
<keyword id="KW-1185">Reference proteome</keyword>
<sequence>MTKYERDPELVNFLSKVEDLNSKRYSNIPSSKPAGEALSPVRSHNSGEYRRADMMTGKNVEGCDNLAYRSAYNYEMTFSPKKTHYSLSELNLERITPRPDLEGSASQKEKKFLISEEDYLLLQKLKASQTYNDSNADKNLPSFEKGPRMPSRGRPRPREKEIITIQYDFELPGRADIPSSSSSSSPPPLPTRRDHIKITDGNEEKPLLPTRPNKAEVTESPSSRSIKPDAVVPERVKPAPPVSRSTKPASFLSSLEDNKLTKAKSYNSEMETPKTTVKSSHIDYLDSIQLKPTTLSPTMKNKPKPTPPSPPAKRIPRSESFIKSMLNSNLTTTSKPSLPEKPQKLRNANLAAHKTKPSIPPKKVELNIVLPELRPVETSPTKQNFENSIDLPKLRSSNRNIKKEEEDSIPEAIKGIQNLKKTKQQKPAIPQKKSFLTNNSKNTTLKNGDDINKLNDEIEALSLRNNLKKRPPTAPQRKISLPEALRKVELMKKSKTEPVLESSNELSINAKLDAIIASRNLRASNTLPELSGVNTNIATSDKYTTSRDETVKETKPLVHPNKNRTRGPRRKLPTRV</sequence>
<accession>Q06604</accession>
<accession>D6W4H2</accession>
<proteinExistence type="evidence at protein level"/>
<evidence type="ECO:0000256" key="1">
    <source>
        <dbReference type="SAM" id="MobiDB-lite"/>
    </source>
</evidence>
<evidence type="ECO:0000269" key="2">
    <source>
    </source>
</evidence>
<evidence type="ECO:0000269" key="3">
    <source>
    </source>
</evidence>
<evidence type="ECO:0000269" key="4">
    <source>
    </source>
</evidence>
<evidence type="ECO:0000269" key="5">
    <source>
    </source>
</evidence>
<evidence type="ECO:0000269" key="6">
    <source>
    </source>
</evidence>
<evidence type="ECO:0000303" key="7">
    <source>
    </source>
</evidence>
<evidence type="ECO:0000305" key="8">
    <source>
    </source>
</evidence>
<evidence type="ECO:0007744" key="9">
    <source>
    </source>
</evidence>
<evidence type="ECO:0007744" key="10">
    <source>
    </source>
</evidence>
<evidence type="ECO:0007744" key="11">
    <source>
    </source>
</evidence>
<protein>
    <recommendedName>
        <fullName evidence="8">F-actin capping regulator BSP1</fullName>
    </recommendedName>
    <alternativeName>
        <fullName>Binding of synaptojanin polyphosphoinositide phosphatase domain protein 1</fullName>
    </alternativeName>
    <alternativeName>
        <fullName evidence="7">Capping protein interaction motif-containing protein BSP1</fullName>
        <shortName evidence="7">CPI motif-containing protein BSP1</shortName>
    </alternativeName>
</protein>
<name>BSP1_YEAST</name>
<gene>
    <name type="primary">BSP1</name>
    <name type="ordered locus">YPR171W</name>
</gene>
<dbReference type="EMBL" id="U25842">
    <property type="protein sequence ID" value="AAB68105.1"/>
    <property type="molecule type" value="Genomic_DNA"/>
</dbReference>
<dbReference type="EMBL" id="BK006949">
    <property type="protein sequence ID" value="DAA11588.1"/>
    <property type="molecule type" value="Genomic_DNA"/>
</dbReference>
<dbReference type="PIR" id="S59829">
    <property type="entry name" value="S59829"/>
</dbReference>
<dbReference type="RefSeq" id="NP_015497.1">
    <property type="nucleotide sequence ID" value="NM_001184268.1"/>
</dbReference>
<dbReference type="BioGRID" id="36344">
    <property type="interactions" value="132"/>
</dbReference>
<dbReference type="DIP" id="DIP-2756N"/>
<dbReference type="FunCoup" id="Q06604">
    <property type="interactions" value="85"/>
</dbReference>
<dbReference type="IntAct" id="Q06604">
    <property type="interactions" value="27"/>
</dbReference>
<dbReference type="MINT" id="Q06604"/>
<dbReference type="STRING" id="4932.YPR171W"/>
<dbReference type="GlyGen" id="Q06604">
    <property type="glycosylation" value="8 sites, 1 O-linked glycan (7 sites)"/>
</dbReference>
<dbReference type="iPTMnet" id="Q06604"/>
<dbReference type="PaxDb" id="4932-YPR171W"/>
<dbReference type="PeptideAtlas" id="Q06604"/>
<dbReference type="EnsemblFungi" id="YPR171W_mRNA">
    <property type="protein sequence ID" value="YPR171W"/>
    <property type="gene ID" value="YPR171W"/>
</dbReference>
<dbReference type="GeneID" id="856301"/>
<dbReference type="KEGG" id="sce:YPR171W"/>
<dbReference type="AGR" id="SGD:S000006375"/>
<dbReference type="SGD" id="S000006375">
    <property type="gene designation" value="BSP1"/>
</dbReference>
<dbReference type="VEuPathDB" id="FungiDB:YPR171W"/>
<dbReference type="eggNOG" id="ENOG502S4ZF">
    <property type="taxonomic scope" value="Eukaryota"/>
</dbReference>
<dbReference type="HOGENOM" id="CLU_518734_0_0_1"/>
<dbReference type="InParanoid" id="Q06604"/>
<dbReference type="OMA" id="SAYNYEM"/>
<dbReference type="OrthoDB" id="4069534at2759"/>
<dbReference type="BioCyc" id="YEAST:G3O-34298-MONOMER"/>
<dbReference type="BioGRID-ORCS" id="856301">
    <property type="hits" value="3 hits in 10 CRISPR screens"/>
</dbReference>
<dbReference type="PRO" id="PR:Q06604"/>
<dbReference type="Proteomes" id="UP000002311">
    <property type="component" value="Chromosome XVI"/>
</dbReference>
<dbReference type="RNAct" id="Q06604">
    <property type="molecule type" value="protein"/>
</dbReference>
<dbReference type="GO" id="GO:0030479">
    <property type="term" value="C:actin cortical patch"/>
    <property type="evidence" value="ECO:0000314"/>
    <property type="project" value="SGD"/>
</dbReference>
<dbReference type="GO" id="GO:0005935">
    <property type="term" value="C:cellular bud neck"/>
    <property type="evidence" value="ECO:0000314"/>
    <property type="project" value="SGD"/>
</dbReference>
<dbReference type="GO" id="GO:0005934">
    <property type="term" value="C:cellular bud tip"/>
    <property type="evidence" value="ECO:0000314"/>
    <property type="project" value="SGD"/>
</dbReference>
<dbReference type="GO" id="GO:0043332">
    <property type="term" value="C:mating projection tip"/>
    <property type="evidence" value="ECO:0007005"/>
    <property type="project" value="SGD"/>
</dbReference>
<dbReference type="GO" id="GO:0016020">
    <property type="term" value="C:membrane"/>
    <property type="evidence" value="ECO:0000314"/>
    <property type="project" value="SGD"/>
</dbReference>
<dbReference type="GO" id="GO:0110085">
    <property type="term" value="C:mitotic actomyosin contractile ring"/>
    <property type="evidence" value="ECO:0000314"/>
    <property type="project" value="SGD"/>
</dbReference>
<dbReference type="GO" id="GO:0005886">
    <property type="term" value="C:plasma membrane"/>
    <property type="evidence" value="ECO:0007669"/>
    <property type="project" value="UniProtKB-SubCell"/>
</dbReference>
<dbReference type="GO" id="GO:0051015">
    <property type="term" value="F:actin filament binding"/>
    <property type="evidence" value="ECO:0000314"/>
    <property type="project" value="SGD"/>
</dbReference>
<dbReference type="GO" id="GO:0030674">
    <property type="term" value="F:protein-macromolecule adaptor activity"/>
    <property type="evidence" value="ECO:0000314"/>
    <property type="project" value="SGD"/>
</dbReference>
<dbReference type="GO" id="GO:0051666">
    <property type="term" value="P:actin cortical patch localization"/>
    <property type="evidence" value="ECO:0000315"/>
    <property type="project" value="SGD"/>
</dbReference>
<dbReference type="GO" id="GO:0044379">
    <property type="term" value="P:protein localization to actin cortical patch"/>
    <property type="evidence" value="ECO:0000315"/>
    <property type="project" value="SGD"/>
</dbReference>
<dbReference type="GO" id="GO:1904498">
    <property type="term" value="P:protein localization to mitotic actomyosin contractile ring"/>
    <property type="evidence" value="ECO:0000315"/>
    <property type="project" value="SGD"/>
</dbReference>
<organism>
    <name type="scientific">Saccharomyces cerevisiae (strain ATCC 204508 / S288c)</name>
    <name type="common">Baker's yeast</name>
    <dbReference type="NCBI Taxonomy" id="559292"/>
    <lineage>
        <taxon>Eukaryota</taxon>
        <taxon>Fungi</taxon>
        <taxon>Dikarya</taxon>
        <taxon>Ascomycota</taxon>
        <taxon>Saccharomycotina</taxon>
        <taxon>Saccharomycetes</taxon>
        <taxon>Saccharomycetales</taxon>
        <taxon>Saccharomycetaceae</taxon>
        <taxon>Saccharomyces</taxon>
    </lineage>
</organism>
<feature type="chain" id="PRO_0000228137" description="F-actin capping regulator BSP1">
    <location>
        <begin position="1"/>
        <end position="576"/>
    </location>
</feature>
<feature type="region of interest" description="Disordered" evidence="1">
    <location>
        <begin position="24"/>
        <end position="50"/>
    </location>
</feature>
<feature type="region of interest" description="Disordered" evidence="1">
    <location>
        <begin position="132"/>
        <end position="160"/>
    </location>
</feature>
<feature type="region of interest" description="Disordered" evidence="1">
    <location>
        <begin position="173"/>
        <end position="316"/>
    </location>
</feature>
<feature type="region of interest" description="Interaction with F-actin" evidence="6">
    <location>
        <begin position="408"/>
        <end position="470"/>
    </location>
</feature>
<feature type="region of interest" description="Disordered" evidence="1">
    <location>
        <begin position="541"/>
        <end position="576"/>
    </location>
</feature>
<feature type="region of interest" description="Interaction with the F-actin capping complex" evidence="6">
    <location>
        <begin position="547"/>
        <end position="576"/>
    </location>
</feature>
<feature type="compositionally biased region" description="Basic and acidic residues" evidence="1">
    <location>
        <begin position="191"/>
        <end position="206"/>
    </location>
</feature>
<feature type="compositionally biased region" description="Polar residues" evidence="1">
    <location>
        <begin position="243"/>
        <end position="255"/>
    </location>
</feature>
<feature type="compositionally biased region" description="Polar residues" evidence="1">
    <location>
        <begin position="264"/>
        <end position="279"/>
    </location>
</feature>
<feature type="compositionally biased region" description="Pro residues" evidence="1">
    <location>
        <begin position="304"/>
        <end position="313"/>
    </location>
</feature>
<feature type="compositionally biased region" description="Basic and acidic residues" evidence="1">
    <location>
        <begin position="544"/>
        <end position="556"/>
    </location>
</feature>
<feature type="compositionally biased region" description="Basic residues" evidence="1">
    <location>
        <begin position="561"/>
        <end position="576"/>
    </location>
</feature>
<feature type="modified residue" description="Phosphoserine" evidence="9">
    <location>
        <position position="46"/>
    </location>
</feature>
<feature type="modified residue" description="Phosphoserine" evidence="11">
    <location>
        <position position="79"/>
    </location>
</feature>
<feature type="modified residue" description="Phosphoserine" evidence="11">
    <location>
        <position position="88"/>
    </location>
</feature>
<feature type="modified residue" description="Phosphoserine" evidence="11">
    <location>
        <position position="185"/>
    </location>
</feature>
<feature type="modified residue" description="Phosphoserine" evidence="10">
    <location>
        <position position="220"/>
    </location>
</feature>
<feature type="modified residue" description="Phosphoserine" evidence="9">
    <location>
        <position position="309"/>
    </location>
</feature>
<feature type="modified residue" description="Phosphoserine" evidence="9">
    <location>
        <position position="320"/>
    </location>
</feature>
<reference key="1">
    <citation type="journal article" date="1997" name="Nature">
        <title>The nucleotide sequence of Saccharomyces cerevisiae chromosome XVI.</title>
        <authorList>
            <person name="Bussey H."/>
            <person name="Storms R.K."/>
            <person name="Ahmed A."/>
            <person name="Albermann K."/>
            <person name="Allen E."/>
            <person name="Ansorge W."/>
            <person name="Araujo R."/>
            <person name="Aparicio A."/>
            <person name="Barrell B.G."/>
            <person name="Badcock K."/>
            <person name="Benes V."/>
            <person name="Botstein D."/>
            <person name="Bowman S."/>
            <person name="Brueckner M."/>
            <person name="Carpenter J."/>
            <person name="Cherry J.M."/>
            <person name="Chung E."/>
            <person name="Churcher C.M."/>
            <person name="Coster F."/>
            <person name="Davis K."/>
            <person name="Davis R.W."/>
            <person name="Dietrich F.S."/>
            <person name="Delius H."/>
            <person name="DiPaolo T."/>
            <person name="Dubois E."/>
            <person name="Duesterhoeft A."/>
            <person name="Duncan M."/>
            <person name="Floeth M."/>
            <person name="Fortin N."/>
            <person name="Friesen J.D."/>
            <person name="Fritz C."/>
            <person name="Goffeau A."/>
            <person name="Hall J."/>
            <person name="Hebling U."/>
            <person name="Heumann K."/>
            <person name="Hilbert H."/>
            <person name="Hillier L.W."/>
            <person name="Hunicke-Smith S."/>
            <person name="Hyman R.W."/>
            <person name="Johnston M."/>
            <person name="Kalman S."/>
            <person name="Kleine K."/>
            <person name="Komp C."/>
            <person name="Kurdi O."/>
            <person name="Lashkari D."/>
            <person name="Lew H."/>
            <person name="Lin A."/>
            <person name="Lin D."/>
            <person name="Louis E.J."/>
            <person name="Marathe R."/>
            <person name="Messenguy F."/>
            <person name="Mewes H.-W."/>
            <person name="Mirtipati S."/>
            <person name="Moestl D."/>
            <person name="Mueller-Auer S."/>
            <person name="Namath A."/>
            <person name="Nentwich U."/>
            <person name="Oefner P."/>
            <person name="Pearson D."/>
            <person name="Petel F.X."/>
            <person name="Pohl T.M."/>
            <person name="Purnelle B."/>
            <person name="Rajandream M.A."/>
            <person name="Rechmann S."/>
            <person name="Rieger M."/>
            <person name="Riles L."/>
            <person name="Roberts D."/>
            <person name="Schaefer M."/>
            <person name="Scharfe M."/>
            <person name="Scherens B."/>
            <person name="Schramm S."/>
            <person name="Schroeder M."/>
            <person name="Sdicu A.-M."/>
            <person name="Tettelin H."/>
            <person name="Urrestarazu L.A."/>
            <person name="Ushinsky S."/>
            <person name="Vierendeels F."/>
            <person name="Vissers S."/>
            <person name="Voss H."/>
            <person name="Walsh S.V."/>
            <person name="Wambutt R."/>
            <person name="Wang Y."/>
            <person name="Wedler E."/>
            <person name="Wedler H."/>
            <person name="Winnett E."/>
            <person name="Zhong W.-W."/>
            <person name="Zollner A."/>
            <person name="Vo D.H."/>
            <person name="Hani J."/>
        </authorList>
    </citation>
    <scope>NUCLEOTIDE SEQUENCE [LARGE SCALE GENOMIC DNA]</scope>
    <source>
        <strain>ATCC 204508 / S288c</strain>
    </source>
</reference>
<reference key="2">
    <citation type="journal article" date="2014" name="G3 (Bethesda)">
        <title>The reference genome sequence of Saccharomyces cerevisiae: Then and now.</title>
        <authorList>
            <person name="Engel S.R."/>
            <person name="Dietrich F.S."/>
            <person name="Fisk D.G."/>
            <person name="Binkley G."/>
            <person name="Balakrishnan R."/>
            <person name="Costanzo M.C."/>
            <person name="Dwight S.S."/>
            <person name="Hitz B.C."/>
            <person name="Karra K."/>
            <person name="Nash R.S."/>
            <person name="Weng S."/>
            <person name="Wong E.D."/>
            <person name="Lloyd P."/>
            <person name="Skrzypek M.S."/>
            <person name="Miyasato S.R."/>
            <person name="Simison M."/>
            <person name="Cherry J.M."/>
        </authorList>
    </citation>
    <scope>GENOME REANNOTATION</scope>
    <source>
        <strain>ATCC 204508 / S288c</strain>
    </source>
</reference>
<reference key="3">
    <citation type="journal article" date="2001" name="J. Cell Biol.">
        <title>A protein interaction map for cell polarity development.</title>
        <authorList>
            <person name="Drees B.L."/>
            <person name="Sundin B.A."/>
            <person name="Brazeau E."/>
            <person name="Caviston J.P."/>
            <person name="Chen G.-C."/>
            <person name="Guo W."/>
            <person name="Kozminski K.G."/>
            <person name="Lau M.W."/>
            <person name="Moskow J.J."/>
            <person name="Tong A."/>
            <person name="Schenkman L.R."/>
            <person name="McKenzie A. III"/>
            <person name="Brennwald P.J."/>
            <person name="Longtine M."/>
            <person name="Bi E."/>
            <person name="Chan C."/>
            <person name="Novick P."/>
            <person name="Boone C."/>
            <person name="Pringle J.R."/>
            <person name="Davis T.N."/>
            <person name="Fields S."/>
            <person name="Drubin D.G."/>
        </authorList>
    </citation>
    <scope>INTERACTION WITH CAP1; RVS167 AND SLA1</scope>
    <scope>SUBCELLULAR LOCATION</scope>
</reference>
<reference key="4">
    <citation type="journal article" date="2003" name="FEBS Lett.">
        <title>Bsp1p/Ypr171p is an adapter that directly links some synaptojanin family members to the cortical actin cytoskeleton in yeast.</title>
        <authorList>
            <person name="Wicky S."/>
            <person name="Frischmuth S."/>
            <person name="Singer-Krueger B."/>
        </authorList>
    </citation>
    <scope>FUNCTION</scope>
    <scope>INTERACTION WITH INP52 AND INP53</scope>
    <scope>SUBCELLULAR LOCATION</scope>
</reference>
<reference key="5">
    <citation type="journal article" date="2003" name="Nature">
        <title>Global analysis of protein localization in budding yeast.</title>
        <authorList>
            <person name="Huh W.-K."/>
            <person name="Falvo J.V."/>
            <person name="Gerke L.C."/>
            <person name="Carroll A.S."/>
            <person name="Howson R.W."/>
            <person name="Weissman J.S."/>
            <person name="O'Shea E.K."/>
        </authorList>
    </citation>
    <scope>SUBCELLULAR LOCATION [LARGE SCALE ANALYSIS]</scope>
</reference>
<reference key="6">
    <citation type="journal article" date="2003" name="Nature">
        <title>Global analysis of protein expression in yeast.</title>
        <authorList>
            <person name="Ghaemmaghami S."/>
            <person name="Huh W.-K."/>
            <person name="Bower K."/>
            <person name="Howson R.W."/>
            <person name="Belle A."/>
            <person name="Dephoure N."/>
            <person name="O'Shea E.K."/>
            <person name="Weissman J.S."/>
        </authorList>
    </citation>
    <scope>LEVEL OF PROTEIN EXPRESSION [LARGE SCALE ANALYSIS]</scope>
</reference>
<reference key="7">
    <citation type="journal article" date="2003" name="Nature">
        <title>Targets of the cyclin-dependent kinase Cdk1.</title>
        <authorList>
            <person name="Ubersax J.A."/>
            <person name="Woodbury E.L."/>
            <person name="Quang P.N."/>
            <person name="Paraz M."/>
            <person name="Blethrow J.D."/>
            <person name="Shah K."/>
            <person name="Shokat K.M."/>
            <person name="Morgan D.O."/>
        </authorList>
    </citation>
    <scope>PHOSPHORYLATION BY CDC28</scope>
</reference>
<reference key="8">
    <citation type="journal article" date="2007" name="J. Proteome Res.">
        <title>Large-scale phosphorylation analysis of alpha-factor-arrested Saccharomyces cerevisiae.</title>
        <authorList>
            <person name="Li X."/>
            <person name="Gerber S.A."/>
            <person name="Rudner A.D."/>
            <person name="Beausoleil S.A."/>
            <person name="Haas W."/>
            <person name="Villen J."/>
            <person name="Elias J.E."/>
            <person name="Gygi S.P."/>
        </authorList>
    </citation>
    <scope>IDENTIFICATION BY MASS SPECTROMETRY [LARGE SCALE ANALYSIS]</scope>
    <source>
        <strain>ADR376</strain>
    </source>
</reference>
<reference key="9">
    <citation type="journal article" date="2007" name="Proc. Natl. Acad. Sci. U.S.A.">
        <title>Analysis of phosphorylation sites on proteins from Saccharomyces cerevisiae by electron transfer dissociation (ETD) mass spectrometry.</title>
        <authorList>
            <person name="Chi A."/>
            <person name="Huttenhower C."/>
            <person name="Geer L.Y."/>
            <person name="Coon J.J."/>
            <person name="Syka J.E.P."/>
            <person name="Bai D.L."/>
            <person name="Shabanowitz J."/>
            <person name="Burke D.J."/>
            <person name="Troyanskaya O.G."/>
            <person name="Hunt D.F."/>
        </authorList>
    </citation>
    <scope>PHOSPHORYLATION [LARGE SCALE ANALYSIS] AT SER-46; SER-309 AND SER-320</scope>
    <scope>IDENTIFICATION BY MASS SPECTROMETRY [LARGE SCALE ANALYSIS]</scope>
</reference>
<reference key="10">
    <citation type="journal article" date="2008" name="Mol. Cell. Proteomics">
        <title>A multidimensional chromatography technology for in-depth phosphoproteome analysis.</title>
        <authorList>
            <person name="Albuquerque C.P."/>
            <person name="Smolka M.B."/>
            <person name="Payne S.H."/>
            <person name="Bafna V."/>
            <person name="Eng J."/>
            <person name="Zhou H."/>
        </authorList>
    </citation>
    <scope>PHOSPHORYLATION [LARGE SCALE ANALYSIS] AT SER-220</scope>
    <scope>IDENTIFICATION BY MASS SPECTROMETRY [LARGE SCALE ANALYSIS]</scope>
</reference>
<reference key="11">
    <citation type="journal article" date="2009" name="Science">
        <title>Global analysis of Cdk1 substrate phosphorylation sites provides insights into evolution.</title>
        <authorList>
            <person name="Holt L.J."/>
            <person name="Tuch B.B."/>
            <person name="Villen J."/>
            <person name="Johnson A.D."/>
            <person name="Gygi S.P."/>
            <person name="Morgan D.O."/>
        </authorList>
    </citation>
    <scope>PHOSPHORYLATION [LARGE SCALE ANALYSIS] AT SER-79; SER-88 AND SER-185</scope>
    <scope>IDENTIFICATION BY MASS SPECTROMETRY [LARGE SCALE ANALYSIS]</scope>
</reference>
<reference key="12">
    <citation type="journal article" date="2024" name="Mol. Biol. Cell">
        <title>Bsp1, a fungal CPI motif protein, regulates actin filament capping in endocytosis and cytokinesis.</title>
        <authorList>
            <person name="Hummel D.R."/>
            <person name="Hakala M."/>
            <person name="Toret C.P."/>
            <person name="Kaksonen M."/>
        </authorList>
    </citation>
    <scope>FUNCTION</scope>
    <scope>SUBCELLULAR LOCATION</scope>
</reference>